<feature type="chain" id="PRO_1000188644" description="tRNA-cytidine(32) 2-sulfurtransferase">
    <location>
        <begin position="1"/>
        <end position="255"/>
    </location>
</feature>
<feature type="short sequence motif" description="PP-loop motif" evidence="1">
    <location>
        <begin position="37"/>
        <end position="42"/>
    </location>
</feature>
<feature type="binding site" evidence="1">
    <location>
        <position position="112"/>
    </location>
    <ligand>
        <name>[4Fe-4S] cluster</name>
        <dbReference type="ChEBI" id="CHEBI:49883"/>
    </ligand>
</feature>
<feature type="binding site" evidence="1">
    <location>
        <position position="115"/>
    </location>
    <ligand>
        <name>[4Fe-4S] cluster</name>
        <dbReference type="ChEBI" id="CHEBI:49883"/>
    </ligand>
</feature>
<feature type="binding site" evidence="1">
    <location>
        <position position="202"/>
    </location>
    <ligand>
        <name>[4Fe-4S] cluster</name>
        <dbReference type="ChEBI" id="CHEBI:49883"/>
    </ligand>
</feature>
<dbReference type="EC" id="2.8.1.-" evidence="1"/>
<dbReference type="EMBL" id="CP001124">
    <property type="protein sequence ID" value="ACH37643.1"/>
    <property type="molecule type" value="Genomic_DNA"/>
</dbReference>
<dbReference type="RefSeq" id="WP_012529050.1">
    <property type="nucleotide sequence ID" value="NC_011146.1"/>
</dbReference>
<dbReference type="SMR" id="B5ED57"/>
<dbReference type="STRING" id="404380.Gbem_0615"/>
<dbReference type="KEGG" id="gbm:Gbem_0615"/>
<dbReference type="eggNOG" id="COG0037">
    <property type="taxonomic scope" value="Bacteria"/>
</dbReference>
<dbReference type="HOGENOM" id="CLU_026481_0_0_7"/>
<dbReference type="OrthoDB" id="9801054at2"/>
<dbReference type="Proteomes" id="UP000008825">
    <property type="component" value="Chromosome"/>
</dbReference>
<dbReference type="GO" id="GO:0005737">
    <property type="term" value="C:cytoplasm"/>
    <property type="evidence" value="ECO:0007669"/>
    <property type="project" value="UniProtKB-SubCell"/>
</dbReference>
<dbReference type="GO" id="GO:0051539">
    <property type="term" value="F:4 iron, 4 sulfur cluster binding"/>
    <property type="evidence" value="ECO:0007669"/>
    <property type="project" value="UniProtKB-KW"/>
</dbReference>
<dbReference type="GO" id="GO:0005524">
    <property type="term" value="F:ATP binding"/>
    <property type="evidence" value="ECO:0007669"/>
    <property type="project" value="UniProtKB-KW"/>
</dbReference>
<dbReference type="GO" id="GO:0046872">
    <property type="term" value="F:metal ion binding"/>
    <property type="evidence" value="ECO:0007669"/>
    <property type="project" value="UniProtKB-KW"/>
</dbReference>
<dbReference type="GO" id="GO:0016740">
    <property type="term" value="F:transferase activity"/>
    <property type="evidence" value="ECO:0007669"/>
    <property type="project" value="UniProtKB-KW"/>
</dbReference>
<dbReference type="GO" id="GO:0000049">
    <property type="term" value="F:tRNA binding"/>
    <property type="evidence" value="ECO:0007669"/>
    <property type="project" value="UniProtKB-KW"/>
</dbReference>
<dbReference type="GO" id="GO:0006400">
    <property type="term" value="P:tRNA modification"/>
    <property type="evidence" value="ECO:0007669"/>
    <property type="project" value="UniProtKB-ARBA"/>
</dbReference>
<dbReference type="CDD" id="cd24138">
    <property type="entry name" value="TtcA-like"/>
    <property type="match status" value="1"/>
</dbReference>
<dbReference type="Gene3D" id="3.40.50.620">
    <property type="entry name" value="HUPs"/>
    <property type="match status" value="1"/>
</dbReference>
<dbReference type="HAMAP" id="MF_01850">
    <property type="entry name" value="TtcA"/>
    <property type="match status" value="1"/>
</dbReference>
<dbReference type="InterPro" id="IPR014729">
    <property type="entry name" value="Rossmann-like_a/b/a_fold"/>
</dbReference>
<dbReference type="InterPro" id="IPR011063">
    <property type="entry name" value="TilS/TtcA_N"/>
</dbReference>
<dbReference type="InterPro" id="IPR012089">
    <property type="entry name" value="tRNA_Cyd_32_2_STrfase"/>
</dbReference>
<dbReference type="InterPro" id="IPR035107">
    <property type="entry name" value="tRNA_thiolation_TtcA_Ctu1"/>
</dbReference>
<dbReference type="NCBIfam" id="NF007972">
    <property type="entry name" value="PRK10696.1"/>
    <property type="match status" value="1"/>
</dbReference>
<dbReference type="PANTHER" id="PTHR43686:SF1">
    <property type="entry name" value="AMINOTRAN_5 DOMAIN-CONTAINING PROTEIN"/>
    <property type="match status" value="1"/>
</dbReference>
<dbReference type="PANTHER" id="PTHR43686">
    <property type="entry name" value="SULFURTRANSFERASE-RELATED"/>
    <property type="match status" value="1"/>
</dbReference>
<dbReference type="Pfam" id="PF01171">
    <property type="entry name" value="ATP_bind_3"/>
    <property type="match status" value="1"/>
</dbReference>
<dbReference type="PIRSF" id="PIRSF004976">
    <property type="entry name" value="ATPase_YdaO"/>
    <property type="match status" value="1"/>
</dbReference>
<dbReference type="SUPFAM" id="SSF52402">
    <property type="entry name" value="Adenine nucleotide alpha hydrolases-like"/>
    <property type="match status" value="1"/>
</dbReference>
<comment type="function">
    <text evidence="1">Catalyzes the ATP-dependent 2-thiolation of cytidine in position 32 of tRNA, to form 2-thiocytidine (s(2)C32). The sulfur atoms are provided by the cysteine/cysteine desulfurase (IscS) system.</text>
</comment>
<comment type="catalytic activity">
    <reaction evidence="1">
        <text>cytidine(32) in tRNA + S-sulfanyl-L-cysteinyl-[cysteine desulfurase] + AH2 + ATP = 2-thiocytidine(32) in tRNA + L-cysteinyl-[cysteine desulfurase] + A + AMP + diphosphate + H(+)</text>
        <dbReference type="Rhea" id="RHEA:57048"/>
        <dbReference type="Rhea" id="RHEA-COMP:10288"/>
        <dbReference type="Rhea" id="RHEA-COMP:12157"/>
        <dbReference type="Rhea" id="RHEA-COMP:12158"/>
        <dbReference type="Rhea" id="RHEA-COMP:14821"/>
        <dbReference type="ChEBI" id="CHEBI:13193"/>
        <dbReference type="ChEBI" id="CHEBI:15378"/>
        <dbReference type="ChEBI" id="CHEBI:17499"/>
        <dbReference type="ChEBI" id="CHEBI:29950"/>
        <dbReference type="ChEBI" id="CHEBI:30616"/>
        <dbReference type="ChEBI" id="CHEBI:33019"/>
        <dbReference type="ChEBI" id="CHEBI:61963"/>
        <dbReference type="ChEBI" id="CHEBI:82748"/>
        <dbReference type="ChEBI" id="CHEBI:141453"/>
        <dbReference type="ChEBI" id="CHEBI:456215"/>
    </reaction>
    <physiologicalReaction direction="left-to-right" evidence="1">
        <dbReference type="Rhea" id="RHEA:57049"/>
    </physiologicalReaction>
</comment>
<comment type="cofactor">
    <cofactor evidence="1">
        <name>Mg(2+)</name>
        <dbReference type="ChEBI" id="CHEBI:18420"/>
    </cofactor>
</comment>
<comment type="cofactor">
    <cofactor evidence="1">
        <name>[4Fe-4S] cluster</name>
        <dbReference type="ChEBI" id="CHEBI:49883"/>
    </cofactor>
    <text evidence="1">Binds 1 [4Fe-4S] cluster per subunit. The cluster is chelated by three Cys residues, the fourth Fe has a free coordination site that may bind a sulfur atom transferred from the persulfide of IscS.</text>
</comment>
<comment type="pathway">
    <text evidence="1">tRNA modification.</text>
</comment>
<comment type="subunit">
    <text evidence="1">Homodimer.</text>
</comment>
<comment type="subcellular location">
    <subcellularLocation>
        <location evidence="1">Cytoplasm</location>
    </subcellularLocation>
</comment>
<comment type="miscellaneous">
    <text evidence="1">The thiolation reaction likely consists of two steps: a first activation step by ATP to form an adenylated intermediate of the target base of tRNA, and a second nucleophilic substitution step of the sulfur (S) atom supplied by the hydrosulfide attached to the Fe-S cluster.</text>
</comment>
<comment type="similarity">
    <text evidence="1">Belongs to the TtcA family.</text>
</comment>
<evidence type="ECO:0000255" key="1">
    <source>
        <dbReference type="HAMAP-Rule" id="MF_01850"/>
    </source>
</evidence>
<accession>B5ED57</accession>
<organism>
    <name type="scientific">Citrifermentans bemidjiense (strain ATCC BAA-1014 / DSM 16622 / JCM 12645 / Bem)</name>
    <name type="common">Geobacter bemidjiensis</name>
    <dbReference type="NCBI Taxonomy" id="404380"/>
    <lineage>
        <taxon>Bacteria</taxon>
        <taxon>Pseudomonadati</taxon>
        <taxon>Thermodesulfobacteriota</taxon>
        <taxon>Desulfuromonadia</taxon>
        <taxon>Geobacterales</taxon>
        <taxon>Geobacteraceae</taxon>
        <taxon>Citrifermentans</taxon>
    </lineage>
</organism>
<sequence length="255" mass="28944">MALIEDAAFTRIKNRVGKAIAEFDLISEGDRVAVAVSGGKDSYTMLHMLETLRRRAPVRYELVAINIDSGYRGYRADIIEEHLREHGFTYHMEKTDHYDIISEKRRPNSSYCSICARLKRGTLYTLAQQYGCNKLALGHHMDDFIETLLLNQFFVGSLKAMAPSMLADNGVTTVIRPLVYVPEKEIIPFSRNNRFPVVCCCCPVCGTADLQRKKMKELLETLERDNPLVKKSLLTALSNVHPRHLLDKGLTRKPS</sequence>
<keyword id="KW-0004">4Fe-4S</keyword>
<keyword id="KW-0067">ATP-binding</keyword>
<keyword id="KW-0963">Cytoplasm</keyword>
<keyword id="KW-0408">Iron</keyword>
<keyword id="KW-0411">Iron-sulfur</keyword>
<keyword id="KW-0460">Magnesium</keyword>
<keyword id="KW-0479">Metal-binding</keyword>
<keyword id="KW-0547">Nucleotide-binding</keyword>
<keyword id="KW-1185">Reference proteome</keyword>
<keyword id="KW-0694">RNA-binding</keyword>
<keyword id="KW-0808">Transferase</keyword>
<keyword id="KW-0819">tRNA processing</keyword>
<keyword id="KW-0820">tRNA-binding</keyword>
<name>TTCA_CITBB</name>
<reference key="1">
    <citation type="submission" date="2008-07" db="EMBL/GenBank/DDBJ databases">
        <title>Complete sequence of Geobacter bemidjiensis BEM.</title>
        <authorList>
            <consortium name="US DOE Joint Genome Institute"/>
            <person name="Lucas S."/>
            <person name="Copeland A."/>
            <person name="Lapidus A."/>
            <person name="Glavina del Rio T."/>
            <person name="Dalin E."/>
            <person name="Tice H."/>
            <person name="Bruce D."/>
            <person name="Goodwin L."/>
            <person name="Pitluck S."/>
            <person name="Kiss H."/>
            <person name="Brettin T."/>
            <person name="Detter J.C."/>
            <person name="Han C."/>
            <person name="Kuske C.R."/>
            <person name="Schmutz J."/>
            <person name="Larimer F."/>
            <person name="Land M."/>
            <person name="Hauser L."/>
            <person name="Kyrpides N."/>
            <person name="Lykidis A."/>
            <person name="Lovley D."/>
            <person name="Richardson P."/>
        </authorList>
    </citation>
    <scope>NUCLEOTIDE SEQUENCE [LARGE SCALE GENOMIC DNA]</scope>
    <source>
        <strain>ATCC BAA-1014 / DSM 16622 / JCM 12645 / Bem</strain>
    </source>
</reference>
<gene>
    <name evidence="1" type="primary">ttcA</name>
    <name type="ordered locus">Gbem_0615</name>
</gene>
<proteinExistence type="inferred from homology"/>
<protein>
    <recommendedName>
        <fullName evidence="1">tRNA-cytidine(32) 2-sulfurtransferase</fullName>
        <ecNumber evidence="1">2.8.1.-</ecNumber>
    </recommendedName>
    <alternativeName>
        <fullName evidence="1">Two-thiocytidine biosynthesis protein A</fullName>
    </alternativeName>
    <alternativeName>
        <fullName evidence="1">tRNA 2-thiocytidine biosynthesis protein TtcA</fullName>
    </alternativeName>
</protein>